<accession>Q6CEE7</accession>
<reference key="1">
    <citation type="journal article" date="2004" name="Nature">
        <title>Genome evolution in yeasts.</title>
        <authorList>
            <person name="Dujon B."/>
            <person name="Sherman D."/>
            <person name="Fischer G."/>
            <person name="Durrens P."/>
            <person name="Casaregola S."/>
            <person name="Lafontaine I."/>
            <person name="de Montigny J."/>
            <person name="Marck C."/>
            <person name="Neuveglise C."/>
            <person name="Talla E."/>
            <person name="Goffard N."/>
            <person name="Frangeul L."/>
            <person name="Aigle M."/>
            <person name="Anthouard V."/>
            <person name="Babour A."/>
            <person name="Barbe V."/>
            <person name="Barnay S."/>
            <person name="Blanchin S."/>
            <person name="Beckerich J.-M."/>
            <person name="Beyne E."/>
            <person name="Bleykasten C."/>
            <person name="Boisrame A."/>
            <person name="Boyer J."/>
            <person name="Cattolico L."/>
            <person name="Confanioleri F."/>
            <person name="de Daruvar A."/>
            <person name="Despons L."/>
            <person name="Fabre E."/>
            <person name="Fairhead C."/>
            <person name="Ferry-Dumazet H."/>
            <person name="Groppi A."/>
            <person name="Hantraye F."/>
            <person name="Hennequin C."/>
            <person name="Jauniaux N."/>
            <person name="Joyet P."/>
            <person name="Kachouri R."/>
            <person name="Kerrest A."/>
            <person name="Koszul R."/>
            <person name="Lemaire M."/>
            <person name="Lesur I."/>
            <person name="Ma L."/>
            <person name="Muller H."/>
            <person name="Nicaud J.-M."/>
            <person name="Nikolski M."/>
            <person name="Oztas S."/>
            <person name="Ozier-Kalogeropoulos O."/>
            <person name="Pellenz S."/>
            <person name="Potier S."/>
            <person name="Richard G.-F."/>
            <person name="Straub M.-L."/>
            <person name="Suleau A."/>
            <person name="Swennen D."/>
            <person name="Tekaia F."/>
            <person name="Wesolowski-Louvel M."/>
            <person name="Westhof E."/>
            <person name="Wirth B."/>
            <person name="Zeniou-Meyer M."/>
            <person name="Zivanovic Y."/>
            <person name="Bolotin-Fukuhara M."/>
            <person name="Thierry A."/>
            <person name="Bouchier C."/>
            <person name="Caudron B."/>
            <person name="Scarpelli C."/>
            <person name="Gaillardin C."/>
            <person name="Weissenbach J."/>
            <person name="Wincker P."/>
            <person name="Souciet J.-L."/>
        </authorList>
    </citation>
    <scope>NUCLEOTIDE SEQUENCE [LARGE SCALE GENOMIC DNA]</scope>
    <source>
        <strain>CLIB 122 / E 150</strain>
    </source>
</reference>
<sequence>MLPKTLTIWASLASLAVAQSGQVVFAKNADGKFVHSTDDLDQGQRKIRGKFLHITDIHPDPYFHVGAVAEDKCHVDPDHKDSDYPDEDSELVWFRATGKKKHNHHKGKDHEKMPKAGYYGHPLSSCDGPISLMNATFDWIDQNIRDEIDFIIWTGDNVRHDNDNRYPRLEQDIFGYNQIVSSKFHELFRYNETRDGEGHNGGGDPQHPLVIPIIPSLGNNDVFPHNLYLAGPSFQSRRMLQIWSEFVPEAQQHIFSRGSYYFQEVITGKLAVISLNTLYFYKSNPMSDGCDEKTDPGYKHLVWLGVVLDEMRQRGMKVWLSGHVPPVEKNYEDSCHLKLAYWLTEYRDIIVGSVFGHMNIDHFVVMDPKKIEKAQSQDLGTPGLGYKSHVTDFLDVAISASHPVHTFGSIYKRNYIESVREDYSEIPGPKKWLDEYASNFAIAHVSPSVIPNYFPSLRVWEYNITGLGEEIGNPPHPPPSFRAWSDVLEEFERDYAQDVMDEIEVEWFDANSDVIEAEDNDGDDDEDENEDDPEMLTEEAIKEGVANINPETGTLASIFGGLKFWKSSTAVATSSEPESDDYDSDLDAERKKGKKKGKKGKKGKKGKKGKKKKGKKGKKGKKGKRDKSMPPKFPKDLQPGPAYIPQLFTPIGYTQYYANITQFNKEYKKTGASNFEYVVEYTTNDAPYNFEHLTVRNWVELARVLGKNFRDLDLEAEKSKSDQLWKVYMDRAFVGTGAEYLEEPDDD</sequence>
<organism>
    <name type="scientific">Yarrowia lipolytica (strain CLIB 122 / E 150)</name>
    <name type="common">Yeast</name>
    <name type="synonym">Candida lipolytica</name>
    <dbReference type="NCBI Taxonomy" id="284591"/>
    <lineage>
        <taxon>Eukaryota</taxon>
        <taxon>Fungi</taxon>
        <taxon>Dikarya</taxon>
        <taxon>Ascomycota</taxon>
        <taxon>Saccharomycotina</taxon>
        <taxon>Dipodascomycetes</taxon>
        <taxon>Dipodascales</taxon>
        <taxon>Dipodascales incertae sedis</taxon>
        <taxon>Yarrowia</taxon>
    </lineage>
</organism>
<protein>
    <recommendedName>
        <fullName>Endopolyphosphatase</fullName>
        <ecNumber>3.6.1.10</ecNumber>
    </recommendedName>
</protein>
<keyword id="KW-0325">Glycoprotein</keyword>
<keyword id="KW-0378">Hydrolase</keyword>
<keyword id="KW-0472">Membrane</keyword>
<keyword id="KW-1185">Reference proteome</keyword>
<keyword id="KW-0735">Signal-anchor</keyword>
<keyword id="KW-0812">Transmembrane</keyword>
<keyword id="KW-1133">Transmembrane helix</keyword>
<keyword id="KW-0926">Vacuole</keyword>
<proteinExistence type="inferred from homology"/>
<name>PPN1_YARLI</name>
<feature type="chain" id="PRO_0000058550" description="Endopolyphosphatase">
    <location>
        <begin position="1"/>
        <end position="747"/>
    </location>
</feature>
<feature type="topological domain" description="Cytoplasmic" evidence="2">
    <location>
        <position position="1"/>
    </location>
</feature>
<feature type="transmembrane region" description="Helical; Signal-anchor for type II membrane protein" evidence="2">
    <location>
        <begin position="2"/>
        <end position="22"/>
    </location>
</feature>
<feature type="topological domain" description="Vacuolar" evidence="2">
    <location>
        <begin position="23"/>
        <end position="747"/>
    </location>
</feature>
<feature type="region of interest" description="Disordered" evidence="3">
    <location>
        <begin position="570"/>
        <end position="640"/>
    </location>
</feature>
<feature type="compositionally biased region" description="Acidic residues" evidence="3">
    <location>
        <begin position="577"/>
        <end position="586"/>
    </location>
</feature>
<feature type="compositionally biased region" description="Basic residues" evidence="3">
    <location>
        <begin position="591"/>
        <end position="625"/>
    </location>
</feature>
<feature type="compositionally biased region" description="Basic and acidic residues" evidence="3">
    <location>
        <begin position="626"/>
        <end position="635"/>
    </location>
</feature>
<feature type="glycosylation site" description="N-linked (GlcNAc...) asparagine" evidence="2">
    <location>
        <position position="134"/>
    </location>
</feature>
<feature type="glycosylation site" description="N-linked (GlcNAc...) asparagine" evidence="2">
    <location>
        <position position="191"/>
    </location>
</feature>
<feature type="glycosylation site" description="N-linked (GlcNAc...) asparagine" evidence="2">
    <location>
        <position position="463"/>
    </location>
</feature>
<feature type="glycosylation site" description="N-linked (GlcNAc...) asparagine" evidence="2">
    <location>
        <position position="659"/>
    </location>
</feature>
<gene>
    <name type="primary">PPN1</name>
    <name type="ordered locus">YALI0B16236g</name>
</gene>
<evidence type="ECO:0000250" key="1">
    <source>
        <dbReference type="UniProtKB" id="Q04119"/>
    </source>
</evidence>
<evidence type="ECO:0000255" key="2"/>
<evidence type="ECO:0000256" key="3">
    <source>
        <dbReference type="SAM" id="MobiDB-lite"/>
    </source>
</evidence>
<evidence type="ECO:0000305" key="4"/>
<comment type="function">
    <text evidence="1">Catalyzes the hydrolysis of inorganic polyphosphate (polyP) chains of many hundreds of phosphate residues into shorter lengths.</text>
</comment>
<comment type="catalytic activity">
    <reaction evidence="1">
        <text>[phosphate](n+1) + n H2O = (n+1) phosphate + n H(+)</text>
        <dbReference type="Rhea" id="RHEA:22452"/>
        <dbReference type="Rhea" id="RHEA-COMP:14280"/>
        <dbReference type="ChEBI" id="CHEBI:15377"/>
        <dbReference type="ChEBI" id="CHEBI:15378"/>
        <dbReference type="ChEBI" id="CHEBI:16838"/>
        <dbReference type="ChEBI" id="CHEBI:43474"/>
        <dbReference type="EC" id="3.6.1.10"/>
    </reaction>
</comment>
<comment type="cofactor">
    <cofactor evidence="1">
        <name>a divalent metal cation</name>
        <dbReference type="ChEBI" id="CHEBI:60240"/>
    </cofactor>
</comment>
<comment type="subcellular location">
    <subcellularLocation>
        <location evidence="1">Vacuole membrane</location>
        <topology evidence="1">Single-pass type II membrane protein</topology>
    </subcellularLocation>
</comment>
<comment type="PTM">
    <text evidence="1">Processing by proteases in the vacuole may be required for activation.</text>
</comment>
<comment type="similarity">
    <text evidence="4">Belongs to the endopolyphosphatase PPN1 family.</text>
</comment>
<dbReference type="EC" id="3.6.1.10"/>
<dbReference type="EMBL" id="CR382128">
    <property type="protein sequence ID" value="CAG83218.1"/>
    <property type="molecule type" value="Genomic_DNA"/>
</dbReference>
<dbReference type="RefSeq" id="XP_500965.1">
    <property type="nucleotide sequence ID" value="XM_500965.1"/>
</dbReference>
<dbReference type="SMR" id="Q6CEE7"/>
<dbReference type="FunCoup" id="Q6CEE7">
    <property type="interactions" value="214"/>
</dbReference>
<dbReference type="STRING" id="284591.Q6CEE7"/>
<dbReference type="GlyCosmos" id="Q6CEE7">
    <property type="glycosylation" value="4 sites, No reported glycans"/>
</dbReference>
<dbReference type="EnsemblFungi" id="CAG83218">
    <property type="protein sequence ID" value="CAG83218"/>
    <property type="gene ID" value="YALI0_B16236g"/>
</dbReference>
<dbReference type="KEGG" id="yli:2906836"/>
<dbReference type="VEuPathDB" id="FungiDB:YALI0_B16236g"/>
<dbReference type="HOGENOM" id="CLU_013424_1_1_1"/>
<dbReference type="InParanoid" id="Q6CEE7"/>
<dbReference type="OMA" id="WAERYSV"/>
<dbReference type="OrthoDB" id="86881at4891"/>
<dbReference type="Proteomes" id="UP000001300">
    <property type="component" value="Chromosome B"/>
</dbReference>
<dbReference type="GO" id="GO:0000324">
    <property type="term" value="C:fungal-type vacuole"/>
    <property type="evidence" value="ECO:0000318"/>
    <property type="project" value="GO_Central"/>
</dbReference>
<dbReference type="GO" id="GO:0005774">
    <property type="term" value="C:vacuolar membrane"/>
    <property type="evidence" value="ECO:0007669"/>
    <property type="project" value="UniProtKB-SubCell"/>
</dbReference>
<dbReference type="GO" id="GO:0000298">
    <property type="term" value="F:endopolyphosphatase activity"/>
    <property type="evidence" value="ECO:0000318"/>
    <property type="project" value="GO_Central"/>
</dbReference>
<dbReference type="GO" id="GO:0004309">
    <property type="term" value="F:exopolyphosphatase activity"/>
    <property type="evidence" value="ECO:0000318"/>
    <property type="project" value="GO_Central"/>
</dbReference>
<dbReference type="GO" id="GO:0006798">
    <property type="term" value="P:polyphosphate catabolic process"/>
    <property type="evidence" value="ECO:0000318"/>
    <property type="project" value="GO_Central"/>
</dbReference>
<dbReference type="CDD" id="cd00842">
    <property type="entry name" value="MPP_ASMase"/>
    <property type="match status" value="1"/>
</dbReference>
<dbReference type="InterPro" id="IPR041805">
    <property type="entry name" value="ASMase/PPN1_MPP"/>
</dbReference>
<dbReference type="InterPro" id="IPR012358">
    <property type="entry name" value="EndopolyPtase_N1"/>
</dbReference>
<dbReference type="InterPro" id="IPR029052">
    <property type="entry name" value="Metallo-depent_PP-like"/>
</dbReference>
<dbReference type="PANTHER" id="PTHR10340:SF55">
    <property type="entry name" value="ENDOPOLYPHOSPHATASE"/>
    <property type="match status" value="1"/>
</dbReference>
<dbReference type="PANTHER" id="PTHR10340">
    <property type="entry name" value="SPHINGOMYELIN PHOSPHODIESTERASE"/>
    <property type="match status" value="1"/>
</dbReference>
<dbReference type="PIRSF" id="PIRSF027093">
    <property type="entry name" value="EndopolyPtase_N1"/>
    <property type="match status" value="1"/>
</dbReference>
<dbReference type="SUPFAM" id="SSF56300">
    <property type="entry name" value="Metallo-dependent phosphatases"/>
    <property type="match status" value="1"/>
</dbReference>